<name>YBIX_ECODH</name>
<evidence type="ECO:0000255" key="1">
    <source>
        <dbReference type="HAMAP-Rule" id="MF_00657"/>
    </source>
</evidence>
<comment type="cofactor">
    <cofactor evidence="1">
        <name>Fe(2+)</name>
        <dbReference type="ChEBI" id="CHEBI:29033"/>
    </cofactor>
    <text evidence="1">Binds 1 Fe(2+) ion per subunit.</text>
</comment>
<comment type="cofactor">
    <cofactor evidence="1">
        <name>L-ascorbate</name>
        <dbReference type="ChEBI" id="CHEBI:38290"/>
    </cofactor>
</comment>
<keyword id="KW-0223">Dioxygenase</keyword>
<keyword id="KW-0408">Iron</keyword>
<keyword id="KW-0479">Metal-binding</keyword>
<keyword id="KW-0560">Oxidoreductase</keyword>
<keyword id="KW-0847">Vitamin C</keyword>
<reference key="1">
    <citation type="journal article" date="2008" name="J. Bacteriol.">
        <title>The complete genome sequence of Escherichia coli DH10B: insights into the biology of a laboratory workhorse.</title>
        <authorList>
            <person name="Durfee T."/>
            <person name="Nelson R."/>
            <person name="Baldwin S."/>
            <person name="Plunkett G. III"/>
            <person name="Burland V."/>
            <person name="Mau B."/>
            <person name="Petrosino J.F."/>
            <person name="Qin X."/>
            <person name="Muzny D.M."/>
            <person name="Ayele M."/>
            <person name="Gibbs R.A."/>
            <person name="Csorgo B."/>
            <person name="Posfai G."/>
            <person name="Weinstock G.M."/>
            <person name="Blattner F.R."/>
        </authorList>
    </citation>
    <scope>NUCLEOTIDE SEQUENCE [LARGE SCALE GENOMIC DNA]</scope>
    <source>
        <strain>K12 / DH10B</strain>
    </source>
</reference>
<feature type="chain" id="PRO_0000346479" description="PKHD-type hydroxylase YbiX">
    <location>
        <begin position="1"/>
        <end position="225"/>
    </location>
</feature>
<feature type="domain" description="Fe2OG dioxygenase" evidence="1">
    <location>
        <begin position="78"/>
        <end position="177"/>
    </location>
</feature>
<feature type="binding site" evidence="1">
    <location>
        <position position="96"/>
    </location>
    <ligand>
        <name>Fe cation</name>
        <dbReference type="ChEBI" id="CHEBI:24875"/>
    </ligand>
</feature>
<feature type="binding site" evidence="1">
    <location>
        <position position="98"/>
    </location>
    <ligand>
        <name>Fe cation</name>
        <dbReference type="ChEBI" id="CHEBI:24875"/>
    </ligand>
</feature>
<feature type="binding site" evidence="1">
    <location>
        <position position="158"/>
    </location>
    <ligand>
        <name>Fe cation</name>
        <dbReference type="ChEBI" id="CHEBI:24875"/>
    </ligand>
</feature>
<feature type="binding site" evidence="1">
    <location>
        <position position="168"/>
    </location>
    <ligand>
        <name>2-oxoglutarate</name>
        <dbReference type="ChEBI" id="CHEBI:16810"/>
    </ligand>
</feature>
<protein>
    <recommendedName>
        <fullName evidence="1">PKHD-type hydroxylase YbiX</fullName>
        <ecNumber evidence="1">1.14.11.-</ecNumber>
    </recommendedName>
</protein>
<sequence length="225" mass="25529">MMYHIPGVLSPQDVARFREQLEQAEWVDGRVTTGAQGAQVKNNQQVDTRSTLYAALQNEVLNAVNQHALFFAAALPRTLSTPLFNRYQNNETYGFHVDGAVRSHPQNGWMRTDLSATLFLSDPQSYDGGELVVNDTFGQHRVKLPAGDLVLYPSSSLHCVTPVTRGVRVASFMWIQSMIRDDKKRAMLFELDNNIQSLKSRYGESEEILSLLNLYHNLLREWSEI</sequence>
<dbReference type="EC" id="1.14.11.-" evidence="1"/>
<dbReference type="EMBL" id="CP000948">
    <property type="protein sequence ID" value="ACB02005.1"/>
    <property type="molecule type" value="Genomic_DNA"/>
</dbReference>
<dbReference type="RefSeq" id="WP_000990177.1">
    <property type="nucleotide sequence ID" value="NC_010473.1"/>
</dbReference>
<dbReference type="SMR" id="B1X7D4"/>
<dbReference type="KEGG" id="ecd:ECDH10B_0872"/>
<dbReference type="HOGENOM" id="CLU_106663_0_0_6"/>
<dbReference type="GO" id="GO:0016706">
    <property type="term" value="F:2-oxoglutarate-dependent dioxygenase activity"/>
    <property type="evidence" value="ECO:0007669"/>
    <property type="project" value="UniProtKB-UniRule"/>
</dbReference>
<dbReference type="GO" id="GO:0005506">
    <property type="term" value="F:iron ion binding"/>
    <property type="evidence" value="ECO:0007669"/>
    <property type="project" value="UniProtKB-UniRule"/>
</dbReference>
<dbReference type="GO" id="GO:0031418">
    <property type="term" value="F:L-ascorbic acid binding"/>
    <property type="evidence" value="ECO:0007669"/>
    <property type="project" value="UniProtKB-KW"/>
</dbReference>
<dbReference type="GO" id="GO:0006974">
    <property type="term" value="P:DNA damage response"/>
    <property type="evidence" value="ECO:0007669"/>
    <property type="project" value="TreeGrafter"/>
</dbReference>
<dbReference type="GO" id="GO:0006879">
    <property type="term" value="P:intracellular iron ion homeostasis"/>
    <property type="evidence" value="ECO:0007669"/>
    <property type="project" value="TreeGrafter"/>
</dbReference>
<dbReference type="FunFam" id="2.60.120.620:FF:000006">
    <property type="entry name" value="PKHD-type hydroxylase YbiX"/>
    <property type="match status" value="1"/>
</dbReference>
<dbReference type="FunFam" id="4.10.860.20:FF:000001">
    <property type="entry name" value="PKHD-type hydroxylase YbiX"/>
    <property type="match status" value="1"/>
</dbReference>
<dbReference type="Gene3D" id="2.60.120.620">
    <property type="entry name" value="q2cbj1_9rhob like domain"/>
    <property type="match status" value="1"/>
</dbReference>
<dbReference type="Gene3D" id="4.10.860.20">
    <property type="entry name" value="Rabenosyn, Rab binding domain"/>
    <property type="match status" value="1"/>
</dbReference>
<dbReference type="HAMAP" id="MF_00657">
    <property type="entry name" value="Hydroxyl_YbiX"/>
    <property type="match status" value="1"/>
</dbReference>
<dbReference type="InterPro" id="IPR005123">
    <property type="entry name" value="Oxoglu/Fe-dep_dioxygenase_dom"/>
</dbReference>
<dbReference type="InterPro" id="IPR041097">
    <property type="entry name" value="PKHD_C"/>
</dbReference>
<dbReference type="InterPro" id="IPR023550">
    <property type="entry name" value="PKHD_hydroxylase"/>
</dbReference>
<dbReference type="InterPro" id="IPR006620">
    <property type="entry name" value="Pro_4_hyd_alph"/>
</dbReference>
<dbReference type="InterPro" id="IPR044862">
    <property type="entry name" value="Pro_4_hyd_alph_FE2OG_OXY"/>
</dbReference>
<dbReference type="NCBIfam" id="NF003972">
    <property type="entry name" value="PRK05467.1-1"/>
    <property type="match status" value="1"/>
</dbReference>
<dbReference type="NCBIfam" id="NF003974">
    <property type="entry name" value="PRK05467.1-3"/>
    <property type="match status" value="1"/>
</dbReference>
<dbReference type="NCBIfam" id="NF003975">
    <property type="entry name" value="PRK05467.1-4"/>
    <property type="match status" value="1"/>
</dbReference>
<dbReference type="PANTHER" id="PTHR41536">
    <property type="entry name" value="PKHD-TYPE HYDROXYLASE YBIX"/>
    <property type="match status" value="1"/>
</dbReference>
<dbReference type="PANTHER" id="PTHR41536:SF1">
    <property type="entry name" value="PKHD-TYPE HYDROXYLASE YBIX"/>
    <property type="match status" value="1"/>
</dbReference>
<dbReference type="Pfam" id="PF13640">
    <property type="entry name" value="2OG-FeII_Oxy_3"/>
    <property type="match status" value="1"/>
</dbReference>
<dbReference type="Pfam" id="PF18331">
    <property type="entry name" value="PKHD_C"/>
    <property type="match status" value="1"/>
</dbReference>
<dbReference type="SMART" id="SM00702">
    <property type="entry name" value="P4Hc"/>
    <property type="match status" value="1"/>
</dbReference>
<dbReference type="SUPFAM" id="SSF51197">
    <property type="entry name" value="Clavaminate synthase-like"/>
    <property type="match status" value="1"/>
</dbReference>
<dbReference type="PROSITE" id="PS51471">
    <property type="entry name" value="FE2OG_OXY"/>
    <property type="match status" value="1"/>
</dbReference>
<organism>
    <name type="scientific">Escherichia coli (strain K12 / DH10B)</name>
    <dbReference type="NCBI Taxonomy" id="316385"/>
    <lineage>
        <taxon>Bacteria</taxon>
        <taxon>Pseudomonadati</taxon>
        <taxon>Pseudomonadota</taxon>
        <taxon>Gammaproteobacteria</taxon>
        <taxon>Enterobacterales</taxon>
        <taxon>Enterobacteriaceae</taxon>
        <taxon>Escherichia</taxon>
    </lineage>
</organism>
<accession>B1X7D4</accession>
<proteinExistence type="inferred from homology"/>
<gene>
    <name evidence="1" type="primary">ybiX</name>
    <name type="ordered locus">ECDH10B_0872</name>
</gene>